<gene>
    <name evidence="1" type="primary">gpr</name>
    <name type="ordered locus">RBAM_023840</name>
</gene>
<evidence type="ECO:0000255" key="1">
    <source>
        <dbReference type="HAMAP-Rule" id="MF_00626"/>
    </source>
</evidence>
<dbReference type="EC" id="3.4.24.78" evidence="1"/>
<dbReference type="EMBL" id="CP000560">
    <property type="protein sequence ID" value="ABS74744.1"/>
    <property type="molecule type" value="Genomic_DNA"/>
</dbReference>
<dbReference type="RefSeq" id="WP_007408268.1">
    <property type="nucleotide sequence ID" value="NC_009725.2"/>
</dbReference>
<dbReference type="SMR" id="A7Z6W8"/>
<dbReference type="MEROPS" id="A25.001"/>
<dbReference type="GeneID" id="93081522"/>
<dbReference type="KEGG" id="bay:RBAM_023840"/>
<dbReference type="HOGENOM" id="CLU_055087_1_0_9"/>
<dbReference type="Proteomes" id="UP000001120">
    <property type="component" value="Chromosome"/>
</dbReference>
<dbReference type="GO" id="GO:0004222">
    <property type="term" value="F:metalloendopeptidase activity"/>
    <property type="evidence" value="ECO:0007669"/>
    <property type="project" value="UniProtKB-UniRule"/>
</dbReference>
<dbReference type="GO" id="GO:0006508">
    <property type="term" value="P:proteolysis"/>
    <property type="evidence" value="ECO:0007669"/>
    <property type="project" value="UniProtKB-UniRule"/>
</dbReference>
<dbReference type="GO" id="GO:0009847">
    <property type="term" value="P:spore germination"/>
    <property type="evidence" value="ECO:0007669"/>
    <property type="project" value="UniProtKB-UniRule"/>
</dbReference>
<dbReference type="Gene3D" id="3.40.50.1450">
    <property type="entry name" value="HybD-like"/>
    <property type="match status" value="2"/>
</dbReference>
<dbReference type="HAMAP" id="MF_00626">
    <property type="entry name" value="Germination_prot"/>
    <property type="match status" value="1"/>
</dbReference>
<dbReference type="InterPro" id="IPR023430">
    <property type="entry name" value="Pept_HybD-like_dom_sf"/>
</dbReference>
<dbReference type="InterPro" id="IPR005080">
    <property type="entry name" value="Peptidase_A25"/>
</dbReference>
<dbReference type="NCBIfam" id="TIGR01441">
    <property type="entry name" value="GPR"/>
    <property type="match status" value="1"/>
</dbReference>
<dbReference type="Pfam" id="PF03418">
    <property type="entry name" value="Peptidase_A25"/>
    <property type="match status" value="1"/>
</dbReference>
<dbReference type="PIRSF" id="PIRSF019549">
    <property type="entry name" value="Peptidase_A25"/>
    <property type="match status" value="1"/>
</dbReference>
<dbReference type="SUPFAM" id="SSF53163">
    <property type="entry name" value="HybD-like"/>
    <property type="match status" value="1"/>
</dbReference>
<feature type="propeptide" id="PRO_0000316069" evidence="1">
    <location>
        <begin position="1"/>
        <end position="16"/>
    </location>
</feature>
<feature type="chain" id="PRO_1000051608" description="Germination protease">
    <location>
        <begin position="17"/>
        <end position="368"/>
    </location>
</feature>
<comment type="function">
    <text evidence="1">Initiates the rapid degradation of small, acid-soluble proteins during spore germination.</text>
</comment>
<comment type="catalytic activity">
    <reaction evidence="1">
        <text>Endopeptidase action with P4 Glu or Asp, P1 preferably Glu &gt; Asp, P1' hydrophobic and P2' Ala.</text>
        <dbReference type="EC" id="3.4.24.78"/>
    </reaction>
</comment>
<comment type="subunit">
    <text evidence="1">Homotetramer.</text>
</comment>
<comment type="PTM">
    <text evidence="1">Autoproteolytically processed. The inactive tetrameric zymogen termed p46 autoprocesses to a smaller form termed p41, which is active only during spore germination.</text>
</comment>
<comment type="similarity">
    <text evidence="1">Belongs to the peptidase A25 family.</text>
</comment>
<proteinExistence type="inferred from homology"/>
<keyword id="KW-0378">Hydrolase</keyword>
<keyword id="KW-0645">Protease</keyword>
<keyword id="KW-0865">Zymogen</keyword>
<name>GPR_BACVZ</name>
<reference key="1">
    <citation type="journal article" date="2007" name="Nat. Biotechnol.">
        <title>Comparative analysis of the complete genome sequence of the plant growth-promoting bacterium Bacillus amyloliquefaciens FZB42.</title>
        <authorList>
            <person name="Chen X.H."/>
            <person name="Koumoutsi A."/>
            <person name="Scholz R."/>
            <person name="Eisenreich A."/>
            <person name="Schneider K."/>
            <person name="Heinemeyer I."/>
            <person name="Morgenstern B."/>
            <person name="Voss B."/>
            <person name="Hess W.R."/>
            <person name="Reva O."/>
            <person name="Junge H."/>
            <person name="Voigt B."/>
            <person name="Jungblut P.R."/>
            <person name="Vater J."/>
            <person name="Suessmuth R."/>
            <person name="Liesegang H."/>
            <person name="Strittmatter A."/>
            <person name="Gottschalk G."/>
            <person name="Borriss R."/>
        </authorList>
    </citation>
    <scope>NUCLEOTIDE SEQUENCE [LARGE SCALE GENOMIC DNA]</scope>
    <source>
        <strain>DSM 23117 / BGSC 10A6 / LMG 26770 / FZB42</strain>
    </source>
</reference>
<accession>A7Z6W8</accession>
<protein>
    <recommendedName>
        <fullName evidence="1">Germination protease</fullName>
        <ecNumber evidence="1">3.4.24.78</ecNumber>
    </recommendedName>
    <alternativeName>
        <fullName evidence="1">GPR endopeptidase</fullName>
    </alternativeName>
    <alternativeName>
        <fullName evidence="1">Germination proteinase</fullName>
    </alternativeName>
    <alternativeName>
        <fullName evidence="1">Spore protease</fullName>
    </alternativeName>
</protein>
<sequence length="368" mass="40191">MKNNELDVNQFLIRTDLAVETKQAVKDGQAGQKKEINGFIEKERDKGGIKVRTVDITKEGAELSGKKQGRYVTIEAQGVREHDSDMQEKVTEVFAEEFSAYLSALKIPKDASCLIVGLGNWNVTPDALGPLVTENLLVTRHLFRLQPENVQEGYRPVSALAPGVMGLTGIETSDIIQGVIKESKPDFVIAVDALAARAVERVNTTIQFSDTGIHPGSGVGNKRKELSKETLGIPVIAIGVPTVVDAVTIASDTVDYILKHFGREMKDDSPSRSLVPAGMNFGKKKVLTDEDLPGEKERQSFLGIVGTLDENEKRQLIHEVLSPLGHNLMVTPKEIDTFIDDMANVLANGLNTALHEKVSQDNKGSYNH</sequence>
<organism>
    <name type="scientific">Bacillus velezensis (strain DSM 23117 / BGSC 10A6 / LMG 26770 / FZB42)</name>
    <name type="common">Bacillus amyloliquefaciens subsp. plantarum</name>
    <dbReference type="NCBI Taxonomy" id="326423"/>
    <lineage>
        <taxon>Bacteria</taxon>
        <taxon>Bacillati</taxon>
        <taxon>Bacillota</taxon>
        <taxon>Bacilli</taxon>
        <taxon>Bacillales</taxon>
        <taxon>Bacillaceae</taxon>
        <taxon>Bacillus</taxon>
        <taxon>Bacillus amyloliquefaciens group</taxon>
    </lineage>
</organism>